<dbReference type="EC" id="6.3.3.1" evidence="1"/>
<dbReference type="EMBL" id="CR954246">
    <property type="protein sequence ID" value="CAI87011.1"/>
    <property type="molecule type" value="Genomic_DNA"/>
</dbReference>
<dbReference type="SMR" id="Q3IIQ2"/>
<dbReference type="STRING" id="326442.PSHAa1947"/>
<dbReference type="KEGG" id="pha:PSHAa1947"/>
<dbReference type="PATRIC" id="fig|326442.8.peg.1885"/>
<dbReference type="eggNOG" id="COG0150">
    <property type="taxonomic scope" value="Bacteria"/>
</dbReference>
<dbReference type="HOGENOM" id="CLU_047116_0_0_6"/>
<dbReference type="BioCyc" id="PHAL326442:PSHA_RS09615-MONOMER"/>
<dbReference type="UniPathway" id="UPA00074">
    <property type="reaction ID" value="UER00129"/>
</dbReference>
<dbReference type="Proteomes" id="UP000006843">
    <property type="component" value="Chromosome I"/>
</dbReference>
<dbReference type="GO" id="GO:0005829">
    <property type="term" value="C:cytosol"/>
    <property type="evidence" value="ECO:0007669"/>
    <property type="project" value="TreeGrafter"/>
</dbReference>
<dbReference type="GO" id="GO:0005524">
    <property type="term" value="F:ATP binding"/>
    <property type="evidence" value="ECO:0007669"/>
    <property type="project" value="UniProtKB-KW"/>
</dbReference>
<dbReference type="GO" id="GO:0004637">
    <property type="term" value="F:phosphoribosylamine-glycine ligase activity"/>
    <property type="evidence" value="ECO:0007669"/>
    <property type="project" value="TreeGrafter"/>
</dbReference>
<dbReference type="GO" id="GO:0004641">
    <property type="term" value="F:phosphoribosylformylglycinamidine cyclo-ligase activity"/>
    <property type="evidence" value="ECO:0007669"/>
    <property type="project" value="UniProtKB-UniRule"/>
</dbReference>
<dbReference type="GO" id="GO:0006189">
    <property type="term" value="P:'de novo' IMP biosynthetic process"/>
    <property type="evidence" value="ECO:0007669"/>
    <property type="project" value="UniProtKB-UniRule"/>
</dbReference>
<dbReference type="GO" id="GO:0046084">
    <property type="term" value="P:adenine biosynthetic process"/>
    <property type="evidence" value="ECO:0007669"/>
    <property type="project" value="TreeGrafter"/>
</dbReference>
<dbReference type="CDD" id="cd02196">
    <property type="entry name" value="PurM"/>
    <property type="match status" value="1"/>
</dbReference>
<dbReference type="FunFam" id="3.30.1330.10:FF:000001">
    <property type="entry name" value="Phosphoribosylformylglycinamidine cyclo-ligase"/>
    <property type="match status" value="1"/>
</dbReference>
<dbReference type="FunFam" id="3.90.650.10:FF:000001">
    <property type="entry name" value="Phosphoribosylformylglycinamidine cyclo-ligase"/>
    <property type="match status" value="1"/>
</dbReference>
<dbReference type="Gene3D" id="3.90.650.10">
    <property type="entry name" value="PurM-like C-terminal domain"/>
    <property type="match status" value="1"/>
</dbReference>
<dbReference type="Gene3D" id="3.30.1330.10">
    <property type="entry name" value="PurM-like, N-terminal domain"/>
    <property type="match status" value="1"/>
</dbReference>
<dbReference type="HAMAP" id="MF_00741">
    <property type="entry name" value="AIRS"/>
    <property type="match status" value="1"/>
</dbReference>
<dbReference type="InterPro" id="IPR010918">
    <property type="entry name" value="PurM-like_C_dom"/>
</dbReference>
<dbReference type="InterPro" id="IPR036676">
    <property type="entry name" value="PurM-like_C_sf"/>
</dbReference>
<dbReference type="InterPro" id="IPR016188">
    <property type="entry name" value="PurM-like_N"/>
</dbReference>
<dbReference type="InterPro" id="IPR036921">
    <property type="entry name" value="PurM-like_N_sf"/>
</dbReference>
<dbReference type="InterPro" id="IPR004733">
    <property type="entry name" value="PurM_cligase"/>
</dbReference>
<dbReference type="NCBIfam" id="TIGR00878">
    <property type="entry name" value="purM"/>
    <property type="match status" value="1"/>
</dbReference>
<dbReference type="PANTHER" id="PTHR10520:SF12">
    <property type="entry name" value="TRIFUNCTIONAL PURINE BIOSYNTHETIC PROTEIN ADENOSINE-3"/>
    <property type="match status" value="1"/>
</dbReference>
<dbReference type="PANTHER" id="PTHR10520">
    <property type="entry name" value="TRIFUNCTIONAL PURINE BIOSYNTHETIC PROTEIN ADENOSINE-3-RELATED"/>
    <property type="match status" value="1"/>
</dbReference>
<dbReference type="Pfam" id="PF00586">
    <property type="entry name" value="AIRS"/>
    <property type="match status" value="1"/>
</dbReference>
<dbReference type="Pfam" id="PF02769">
    <property type="entry name" value="AIRS_C"/>
    <property type="match status" value="1"/>
</dbReference>
<dbReference type="SUPFAM" id="SSF56042">
    <property type="entry name" value="PurM C-terminal domain-like"/>
    <property type="match status" value="1"/>
</dbReference>
<dbReference type="SUPFAM" id="SSF55326">
    <property type="entry name" value="PurM N-terminal domain-like"/>
    <property type="match status" value="1"/>
</dbReference>
<comment type="catalytic activity">
    <reaction evidence="1">
        <text>2-formamido-N(1)-(5-O-phospho-beta-D-ribosyl)acetamidine + ATP = 5-amino-1-(5-phospho-beta-D-ribosyl)imidazole + ADP + phosphate + H(+)</text>
        <dbReference type="Rhea" id="RHEA:23032"/>
        <dbReference type="ChEBI" id="CHEBI:15378"/>
        <dbReference type="ChEBI" id="CHEBI:30616"/>
        <dbReference type="ChEBI" id="CHEBI:43474"/>
        <dbReference type="ChEBI" id="CHEBI:137981"/>
        <dbReference type="ChEBI" id="CHEBI:147287"/>
        <dbReference type="ChEBI" id="CHEBI:456216"/>
        <dbReference type="EC" id="6.3.3.1"/>
    </reaction>
</comment>
<comment type="pathway">
    <text evidence="1">Purine metabolism; IMP biosynthesis via de novo pathway; 5-amino-1-(5-phospho-D-ribosyl)imidazole from N(2)-formyl-N(1)-(5-phospho-D-ribosyl)glycinamide: step 2/2.</text>
</comment>
<comment type="subcellular location">
    <subcellularLocation>
        <location evidence="1">Cytoplasm</location>
    </subcellularLocation>
</comment>
<comment type="similarity">
    <text evidence="1">Belongs to the AIR synthase family.</text>
</comment>
<name>PUR5_PSET1</name>
<proteinExistence type="inferred from homology"/>
<protein>
    <recommendedName>
        <fullName evidence="1">Phosphoribosylformylglycinamidine cyclo-ligase</fullName>
        <ecNumber evidence="1">6.3.3.1</ecNumber>
    </recommendedName>
    <alternativeName>
        <fullName evidence="1">AIR synthase</fullName>
    </alternativeName>
    <alternativeName>
        <fullName evidence="1">AIRS</fullName>
    </alternativeName>
    <alternativeName>
        <fullName evidence="1">Phosphoribosyl-aminoimidazole synthetase</fullName>
    </alternativeName>
</protein>
<organism>
    <name type="scientific">Pseudoalteromonas translucida (strain TAC 125)</name>
    <dbReference type="NCBI Taxonomy" id="326442"/>
    <lineage>
        <taxon>Bacteria</taxon>
        <taxon>Pseudomonadati</taxon>
        <taxon>Pseudomonadota</taxon>
        <taxon>Gammaproteobacteria</taxon>
        <taxon>Alteromonadales</taxon>
        <taxon>Pseudoalteromonadaceae</taxon>
        <taxon>Pseudoalteromonas</taxon>
    </lineage>
</organism>
<keyword id="KW-0067">ATP-binding</keyword>
<keyword id="KW-0963">Cytoplasm</keyword>
<keyword id="KW-0436">Ligase</keyword>
<keyword id="KW-0547">Nucleotide-binding</keyword>
<keyword id="KW-0658">Purine biosynthesis</keyword>
<keyword id="KW-1185">Reference proteome</keyword>
<evidence type="ECO:0000255" key="1">
    <source>
        <dbReference type="HAMAP-Rule" id="MF_00741"/>
    </source>
</evidence>
<reference key="1">
    <citation type="journal article" date="2005" name="Genome Res.">
        <title>Coping with cold: the genome of the versatile marine Antarctica bacterium Pseudoalteromonas haloplanktis TAC125.</title>
        <authorList>
            <person name="Medigue C."/>
            <person name="Krin E."/>
            <person name="Pascal G."/>
            <person name="Barbe V."/>
            <person name="Bernsel A."/>
            <person name="Bertin P.N."/>
            <person name="Cheung F."/>
            <person name="Cruveiller S."/>
            <person name="D'Amico S."/>
            <person name="Duilio A."/>
            <person name="Fang G."/>
            <person name="Feller G."/>
            <person name="Ho C."/>
            <person name="Mangenot S."/>
            <person name="Marino G."/>
            <person name="Nilsson J."/>
            <person name="Parrilli E."/>
            <person name="Rocha E.P.C."/>
            <person name="Rouy Z."/>
            <person name="Sekowska A."/>
            <person name="Tutino M.L."/>
            <person name="Vallenet D."/>
            <person name="von Heijne G."/>
            <person name="Danchin A."/>
        </authorList>
    </citation>
    <scope>NUCLEOTIDE SEQUENCE [LARGE SCALE GENOMIC DNA]</scope>
    <source>
        <strain>TAC 125</strain>
    </source>
</reference>
<accession>Q3IIQ2</accession>
<feature type="chain" id="PRO_0000258382" description="Phosphoribosylformylglycinamidine cyclo-ligase">
    <location>
        <begin position="1"/>
        <end position="350"/>
    </location>
</feature>
<sequence length="350" mass="37295">MSEQKQSLSYKDAGVDIDAGNALVERIKGVVKKTRRPEVMGGIGGFGALCEIPAGYKQPVLVAGTDGVGTKLRLAIDLKKHDTVGIDLVAMCVNDLIVQGAEPLFFLDYYATGKLDVDTAADVVTGIGKGCEISGCALIGGETAEMPGMYDGEDYDMAGFCTGVVEKSKIIDGTKVAAGDQLIALASSGPHSNGFSLIRKVLEVSNADTSADFEGKTLGETLLEPTRIYVKPLLELFKHVDVHALSHITGGGFWENIPRVLPASAKAVVKGDSWQWPPIFNWLQENGNITTHEMYRTFNCGVGMVLVVPADKLEQSLSMLKDLGENAWHLGEIQDAAPGEEQVEIVGGAK</sequence>
<gene>
    <name evidence="1" type="primary">purM</name>
    <name type="ordered locus">PSHAa1947</name>
</gene>